<feature type="chain" id="PRO_0000441680" description="SUN domain-containing protein 5">
    <location>
        <begin position="1"/>
        <end position="561"/>
    </location>
</feature>
<feature type="transmembrane region" description="Helical" evidence="1">
    <location>
        <begin position="36"/>
        <end position="56"/>
    </location>
</feature>
<feature type="transmembrane region" description="Helical" evidence="1">
    <location>
        <begin position="501"/>
        <end position="521"/>
    </location>
</feature>
<feature type="transmembrane region" description="Helical" evidence="1">
    <location>
        <begin position="540"/>
        <end position="560"/>
    </location>
</feature>
<feature type="domain" description="SUN" evidence="2">
    <location>
        <begin position="158"/>
        <end position="318"/>
    </location>
</feature>
<feature type="region of interest" description="Disordered" evidence="3">
    <location>
        <begin position="345"/>
        <end position="367"/>
    </location>
</feature>
<feature type="coiled-coil region" evidence="6">
    <location>
        <begin position="454"/>
        <end position="499"/>
    </location>
</feature>
<feature type="splice variant" id="VSP_059088" description="In isoform 2.">
    <original>M</original>
    <variation>MQ</variation>
    <location>
        <position position="454"/>
    </location>
</feature>
<proteinExistence type="evidence at protein level"/>
<name>SUN5_ARATH</name>
<reference key="1">
    <citation type="journal article" date="1999" name="Nature">
        <title>Sequence and analysis of chromosome 4 of the plant Arabidopsis thaliana.</title>
        <authorList>
            <person name="Mayer K.F.X."/>
            <person name="Schueller C."/>
            <person name="Wambutt R."/>
            <person name="Murphy G."/>
            <person name="Volckaert G."/>
            <person name="Pohl T."/>
            <person name="Duesterhoeft A."/>
            <person name="Stiekema W."/>
            <person name="Entian K.-D."/>
            <person name="Terryn N."/>
            <person name="Harris B."/>
            <person name="Ansorge W."/>
            <person name="Brandt P."/>
            <person name="Grivell L.A."/>
            <person name="Rieger M."/>
            <person name="Weichselgartner M."/>
            <person name="de Simone V."/>
            <person name="Obermaier B."/>
            <person name="Mache R."/>
            <person name="Mueller M."/>
            <person name="Kreis M."/>
            <person name="Delseny M."/>
            <person name="Puigdomenech P."/>
            <person name="Watson M."/>
            <person name="Schmidtheini T."/>
            <person name="Reichert B."/>
            <person name="Portetelle D."/>
            <person name="Perez-Alonso M."/>
            <person name="Boutry M."/>
            <person name="Bancroft I."/>
            <person name="Vos P."/>
            <person name="Hoheisel J."/>
            <person name="Zimmermann W."/>
            <person name="Wedler H."/>
            <person name="Ridley P."/>
            <person name="Langham S.-A."/>
            <person name="McCullagh B."/>
            <person name="Bilham L."/>
            <person name="Robben J."/>
            <person name="van der Schueren J."/>
            <person name="Grymonprez B."/>
            <person name="Chuang Y.-J."/>
            <person name="Vandenbussche F."/>
            <person name="Braeken M."/>
            <person name="Weltjens I."/>
            <person name="Voet M."/>
            <person name="Bastiaens I."/>
            <person name="Aert R."/>
            <person name="Defoor E."/>
            <person name="Weitzenegger T."/>
            <person name="Bothe G."/>
            <person name="Ramsperger U."/>
            <person name="Hilbert H."/>
            <person name="Braun M."/>
            <person name="Holzer E."/>
            <person name="Brandt A."/>
            <person name="Peters S."/>
            <person name="van Staveren M."/>
            <person name="Dirkse W."/>
            <person name="Mooijman P."/>
            <person name="Klein Lankhorst R."/>
            <person name="Rose M."/>
            <person name="Hauf J."/>
            <person name="Koetter P."/>
            <person name="Berneiser S."/>
            <person name="Hempel S."/>
            <person name="Feldpausch M."/>
            <person name="Lamberth S."/>
            <person name="Van den Daele H."/>
            <person name="De Keyser A."/>
            <person name="Buysshaert C."/>
            <person name="Gielen J."/>
            <person name="Villarroel R."/>
            <person name="De Clercq R."/>
            <person name="van Montagu M."/>
            <person name="Rogers J."/>
            <person name="Cronin A."/>
            <person name="Quail M.A."/>
            <person name="Bray-Allen S."/>
            <person name="Clark L."/>
            <person name="Doggett J."/>
            <person name="Hall S."/>
            <person name="Kay M."/>
            <person name="Lennard N."/>
            <person name="McLay K."/>
            <person name="Mayes R."/>
            <person name="Pettett A."/>
            <person name="Rajandream M.A."/>
            <person name="Lyne M."/>
            <person name="Benes V."/>
            <person name="Rechmann S."/>
            <person name="Borkova D."/>
            <person name="Bloecker H."/>
            <person name="Scharfe M."/>
            <person name="Grimm M."/>
            <person name="Loehnert T.-H."/>
            <person name="Dose S."/>
            <person name="de Haan M."/>
            <person name="Maarse A.C."/>
            <person name="Schaefer M."/>
            <person name="Mueller-Auer S."/>
            <person name="Gabel C."/>
            <person name="Fuchs M."/>
            <person name="Fartmann B."/>
            <person name="Granderath K."/>
            <person name="Dauner D."/>
            <person name="Herzl A."/>
            <person name="Neumann S."/>
            <person name="Argiriou A."/>
            <person name="Vitale D."/>
            <person name="Liguori R."/>
            <person name="Piravandi E."/>
            <person name="Massenet O."/>
            <person name="Quigley F."/>
            <person name="Clabauld G."/>
            <person name="Muendlein A."/>
            <person name="Felber R."/>
            <person name="Schnabl S."/>
            <person name="Hiller R."/>
            <person name="Schmidt W."/>
            <person name="Lecharny A."/>
            <person name="Aubourg S."/>
            <person name="Chefdor F."/>
            <person name="Cooke R."/>
            <person name="Berger C."/>
            <person name="Monfort A."/>
            <person name="Casacuberta E."/>
            <person name="Gibbons T."/>
            <person name="Weber N."/>
            <person name="Vandenbol M."/>
            <person name="Bargues M."/>
            <person name="Terol J."/>
            <person name="Torres A."/>
            <person name="Perez-Perez A."/>
            <person name="Purnelle B."/>
            <person name="Bent E."/>
            <person name="Johnson S."/>
            <person name="Tacon D."/>
            <person name="Jesse T."/>
            <person name="Heijnen L."/>
            <person name="Schwarz S."/>
            <person name="Scholler P."/>
            <person name="Heber S."/>
            <person name="Francs P."/>
            <person name="Bielke C."/>
            <person name="Frishman D."/>
            <person name="Haase D."/>
            <person name="Lemcke K."/>
            <person name="Mewes H.-W."/>
            <person name="Stocker S."/>
            <person name="Zaccaria P."/>
            <person name="Bevan M."/>
            <person name="Wilson R.K."/>
            <person name="de la Bastide M."/>
            <person name="Habermann K."/>
            <person name="Parnell L."/>
            <person name="Dedhia N."/>
            <person name="Gnoj L."/>
            <person name="Schutz K."/>
            <person name="Huang E."/>
            <person name="Spiegel L."/>
            <person name="Sekhon M."/>
            <person name="Murray J."/>
            <person name="Sheet P."/>
            <person name="Cordes M."/>
            <person name="Abu-Threideh J."/>
            <person name="Stoneking T."/>
            <person name="Kalicki J."/>
            <person name="Graves T."/>
            <person name="Harmon G."/>
            <person name="Edwards J."/>
            <person name="Latreille P."/>
            <person name="Courtney L."/>
            <person name="Cloud J."/>
            <person name="Abbott A."/>
            <person name="Scott K."/>
            <person name="Johnson D."/>
            <person name="Minx P."/>
            <person name="Bentley D."/>
            <person name="Fulton B."/>
            <person name="Miller N."/>
            <person name="Greco T."/>
            <person name="Kemp K."/>
            <person name="Kramer J."/>
            <person name="Fulton L."/>
            <person name="Mardis E."/>
            <person name="Dante M."/>
            <person name="Pepin K."/>
            <person name="Hillier L.W."/>
            <person name="Nelson J."/>
            <person name="Spieth J."/>
            <person name="Ryan E."/>
            <person name="Andrews S."/>
            <person name="Geisel C."/>
            <person name="Layman D."/>
            <person name="Du H."/>
            <person name="Ali J."/>
            <person name="Berghoff A."/>
            <person name="Jones K."/>
            <person name="Drone K."/>
            <person name="Cotton M."/>
            <person name="Joshu C."/>
            <person name="Antonoiu B."/>
            <person name="Zidanic M."/>
            <person name="Strong C."/>
            <person name="Sun H."/>
            <person name="Lamar B."/>
            <person name="Yordan C."/>
            <person name="Ma P."/>
            <person name="Zhong J."/>
            <person name="Preston R."/>
            <person name="Vil D."/>
            <person name="Shekher M."/>
            <person name="Matero A."/>
            <person name="Shah R."/>
            <person name="Swaby I.K."/>
            <person name="O'Shaughnessy A."/>
            <person name="Rodriguez M."/>
            <person name="Hoffman J."/>
            <person name="Till S."/>
            <person name="Granat S."/>
            <person name="Shohdy N."/>
            <person name="Hasegawa A."/>
            <person name="Hameed A."/>
            <person name="Lodhi M."/>
            <person name="Johnson A."/>
            <person name="Chen E."/>
            <person name="Marra M.A."/>
            <person name="Martienssen R."/>
            <person name="McCombie W.R."/>
        </authorList>
    </citation>
    <scope>NUCLEOTIDE SEQUENCE [LARGE SCALE GENOMIC DNA]</scope>
    <source>
        <strain>cv. Columbia</strain>
    </source>
</reference>
<reference key="2">
    <citation type="journal article" date="2017" name="Plant J.">
        <title>Araport11: a complete reannotation of the Arabidopsis thaliana reference genome.</title>
        <authorList>
            <person name="Cheng C.Y."/>
            <person name="Krishnakumar V."/>
            <person name="Chan A.P."/>
            <person name="Thibaud-Nissen F."/>
            <person name="Schobel S."/>
            <person name="Town C.D."/>
        </authorList>
    </citation>
    <scope>GENOME REANNOTATION</scope>
    <source>
        <strain>cv. Columbia</strain>
    </source>
</reference>
<reference key="3">
    <citation type="journal article" date="2014" name="J. Exp. Bot.">
        <title>Characterization of two distinct subfamilies of SUN-domain proteins in Arabidopsis and their interactions with the novel KASH-domain protein AtTIK.</title>
        <authorList>
            <person name="Graumann K."/>
            <person name="Vanrobays E."/>
            <person name="Tutois S."/>
            <person name="Probst A.V."/>
            <person name="Evans D.E."/>
            <person name="Tatout C."/>
        </authorList>
    </citation>
    <scope>SUBUNIT</scope>
    <scope>INTERACTION WITH SUN3 AND TIK</scope>
    <scope>DISRUPTION PHENOTYPE</scope>
</reference>
<reference key="4">
    <citation type="journal article" date="2015" name="J. Exp. Bot.">
        <title>The plant nuclear envelope as a multifunctional platform LINCed by SUN and KASH.</title>
        <authorList>
            <person name="Zhou X."/>
            <person name="Graumann K."/>
            <person name="Meier I."/>
        </authorList>
    </citation>
    <scope>REVIEW</scope>
</reference>
<dbReference type="EMBL" id="AC002343">
    <property type="protein sequence ID" value="AAB63627.1"/>
    <property type="status" value="ALT_SEQ"/>
    <property type="molecule type" value="Genomic_DNA"/>
</dbReference>
<dbReference type="EMBL" id="AL078468">
    <property type="protein sequence ID" value="CAB43895.1"/>
    <property type="status" value="ALT_SEQ"/>
    <property type="molecule type" value="Genomic_DNA"/>
</dbReference>
<dbReference type="EMBL" id="AL161560">
    <property type="protein sequence ID" value="CAB81313.1"/>
    <property type="status" value="ALT_SEQ"/>
    <property type="molecule type" value="Genomic_DNA"/>
</dbReference>
<dbReference type="EMBL" id="CP002687">
    <property type="protein sequence ID" value="AEE84831.1"/>
    <property type="molecule type" value="Genomic_DNA"/>
</dbReference>
<dbReference type="EMBL" id="CP002687">
    <property type="protein sequence ID" value="AEE84832.1"/>
    <property type="molecule type" value="Genomic_DNA"/>
</dbReference>
<dbReference type="PIR" id="T08914">
    <property type="entry name" value="T08914"/>
</dbReference>
<dbReference type="RefSeq" id="NP_001190819.1">
    <molecule id="F4JPE9-2"/>
    <property type="nucleotide sequence ID" value="NM_001203890.1"/>
</dbReference>
<dbReference type="RefSeq" id="NP_194126.5">
    <molecule id="F4JPE9-1"/>
    <property type="nucleotide sequence ID" value="NM_118527.6"/>
</dbReference>
<dbReference type="SMR" id="F4JPE9"/>
<dbReference type="FunCoup" id="F4JPE9">
    <property type="interactions" value="184"/>
</dbReference>
<dbReference type="STRING" id="3702.F4JPE9"/>
<dbReference type="iPTMnet" id="F4JPE9"/>
<dbReference type="PaxDb" id="3702-AT4G23950.2"/>
<dbReference type="ProteomicsDB" id="226546">
    <molecule id="F4JPE9-1"/>
</dbReference>
<dbReference type="EnsemblPlants" id="AT4G23950.1">
    <molecule id="F4JPE9-1"/>
    <property type="protein sequence ID" value="AT4G23950.1"/>
    <property type="gene ID" value="AT4G23950"/>
</dbReference>
<dbReference type="EnsemblPlants" id="AT4G23950.2">
    <molecule id="F4JPE9-2"/>
    <property type="protein sequence ID" value="AT4G23950.2"/>
    <property type="gene ID" value="AT4G23950"/>
</dbReference>
<dbReference type="GeneID" id="828495"/>
<dbReference type="Gramene" id="AT4G23950.1">
    <molecule id="F4JPE9-1"/>
    <property type="protein sequence ID" value="AT4G23950.1"/>
    <property type="gene ID" value="AT4G23950"/>
</dbReference>
<dbReference type="Gramene" id="AT4G23950.2">
    <molecule id="F4JPE9-2"/>
    <property type="protein sequence ID" value="AT4G23950.2"/>
    <property type="gene ID" value="AT4G23950"/>
</dbReference>
<dbReference type="KEGG" id="ath:AT4G23950"/>
<dbReference type="Araport" id="AT4G23950"/>
<dbReference type="TAIR" id="AT4G23950">
    <property type="gene designation" value="SUN5"/>
</dbReference>
<dbReference type="eggNOG" id="KOG1396">
    <property type="taxonomic scope" value="Eukaryota"/>
</dbReference>
<dbReference type="InParanoid" id="F4JPE9"/>
<dbReference type="OMA" id="RDSYCKV"/>
<dbReference type="PRO" id="PR:F4JPE9"/>
<dbReference type="Proteomes" id="UP000006548">
    <property type="component" value="Chromosome 4"/>
</dbReference>
<dbReference type="ExpressionAtlas" id="F4JPE9">
    <property type="expression patterns" value="baseline and differential"/>
</dbReference>
<dbReference type="GO" id="GO:0016020">
    <property type="term" value="C:membrane"/>
    <property type="evidence" value="ECO:0007669"/>
    <property type="project" value="UniProtKB-SubCell"/>
</dbReference>
<dbReference type="GO" id="GO:0006997">
    <property type="term" value="P:nucleus organization"/>
    <property type="evidence" value="ECO:0000316"/>
    <property type="project" value="TAIR"/>
</dbReference>
<dbReference type="FunFam" id="2.60.120.260:FF:000180">
    <property type="entry name" value="SUN domain-containing protein 5"/>
    <property type="match status" value="1"/>
</dbReference>
<dbReference type="Gene3D" id="2.60.120.260">
    <property type="entry name" value="Galactose-binding domain-like"/>
    <property type="match status" value="1"/>
</dbReference>
<dbReference type="InterPro" id="IPR008979">
    <property type="entry name" value="Galactose-bd-like_sf"/>
</dbReference>
<dbReference type="InterPro" id="IPR045120">
    <property type="entry name" value="Suco/Slp1-like"/>
</dbReference>
<dbReference type="InterPro" id="IPR012919">
    <property type="entry name" value="SUN_dom"/>
</dbReference>
<dbReference type="PANTHER" id="PTHR12953">
    <property type="entry name" value="MEMBRANE PROTEIN CH1 RELATED"/>
    <property type="match status" value="1"/>
</dbReference>
<dbReference type="PANTHER" id="PTHR12953:SF3">
    <property type="entry name" value="SUN DOMAIN-CONTAINING PROTEIN 5"/>
    <property type="match status" value="1"/>
</dbReference>
<dbReference type="Pfam" id="PF07738">
    <property type="entry name" value="Sad1_UNC"/>
    <property type="match status" value="1"/>
</dbReference>
<dbReference type="SUPFAM" id="SSF49785">
    <property type="entry name" value="Galactose-binding domain-like"/>
    <property type="match status" value="1"/>
</dbReference>
<dbReference type="PROSITE" id="PS51469">
    <property type="entry name" value="SUN"/>
    <property type="match status" value="1"/>
</dbReference>
<organism>
    <name type="scientific">Arabidopsis thaliana</name>
    <name type="common">Mouse-ear cress</name>
    <dbReference type="NCBI Taxonomy" id="3702"/>
    <lineage>
        <taxon>Eukaryota</taxon>
        <taxon>Viridiplantae</taxon>
        <taxon>Streptophyta</taxon>
        <taxon>Embryophyta</taxon>
        <taxon>Tracheophyta</taxon>
        <taxon>Spermatophyta</taxon>
        <taxon>Magnoliopsida</taxon>
        <taxon>eudicotyledons</taxon>
        <taxon>Gunneridae</taxon>
        <taxon>Pentapetalae</taxon>
        <taxon>rosids</taxon>
        <taxon>malvids</taxon>
        <taxon>Brassicales</taxon>
        <taxon>Brassicaceae</taxon>
        <taxon>Camelineae</taxon>
        <taxon>Arabidopsis</taxon>
    </lineage>
</organism>
<comment type="function">
    <text>Encodes a member of the mid-SUN subfamily of SUN-domain proteins. It is involved in early seed development and nuclear morphology. [TAIR].</text>
</comment>
<comment type="subunit">
    <text evidence="4">Forms homomers. Interacts with SUN3 and TIK.</text>
</comment>
<comment type="subcellular location">
    <subcellularLocation>
        <location evidence="1">Membrane</location>
        <topology evidence="1">Multi-pass membrane protein</topology>
    </subcellularLocation>
</comment>
<comment type="alternative products">
    <event type="alternative splicing"/>
    <isoform>
        <id>F4JPE9-1</id>
        <name>1</name>
        <sequence type="displayed"/>
    </isoform>
    <isoform>
        <id>F4JPE9-2</id>
        <name>2</name>
        <sequence type="described" ref="VSP_059088"/>
    </isoform>
</comment>
<comment type="disruption phenotype">
    <text evidence="4">No visible phenotype. Embryo lethal when associated with disruption mutants SUN3 and SUN4.</text>
</comment>
<comment type="sequence caution" evidence="6">
    <conflict type="erroneous gene model prediction">
        <sequence resource="EMBL-CDS" id="AAB63627"/>
    </conflict>
</comment>
<comment type="sequence caution" evidence="6">
    <conflict type="erroneous gene model prediction">
        <sequence resource="EMBL-CDS" id="CAB43895"/>
    </conflict>
</comment>
<comment type="sequence caution" evidence="6">
    <conflict type="erroneous gene model prediction">
        <sequence resource="EMBL-CDS" id="CAB81313"/>
    </conflict>
</comment>
<protein>
    <recommendedName>
        <fullName evidence="6">SUN domain-containing protein 5</fullName>
        <shortName evidence="5">AtSUN5</shortName>
    </recommendedName>
</protein>
<sequence length="561" mass="63594">MARRGSCSTICLNEKLQRFRIVRISDKADNFNSRSGSFFERSISLVLLLWCFLFLVYSKLGQSHDDYGNADRIGNYTDGSVSKTLNSTSSVFPQATEKENNFCLLRKGQLQDVYEHVLVNNALLICKVVLPERRISKKTLEARDPRYVNLEDKSLKVNGSSQLVNNGTRYRLEPDGNGYNYASAMKGAKVVDHNKEAKGASNVLGKDHDKYLRNPCSVSDKYVVIELAEETLVDTVRIANFEHYSSNPKEFSLSGSLSFPSDMWTPAGSFAAANVKQIQSFRLPEPKWLRYLKLNLVSHYGSEFYCTLSVVEVFGIDALEQMLEDLFVPSETPPSKPAMVELKTADEKQDGEIKSNRTDQIGKETEAQKKKDDVVKTINIIGDKKYEVKEKHNVLKVMMQKVKLIEMNLSLLEDSVKKMNDKQPEVSLEMKKTLVLVEKSKADIREITEWKGKMEKELRDLELWKTLVASRVESLARGNSALRLDVEKIVKEQANLESKELGVLLISLFFVVLATIRLVSTRLWAFLGMSITDKARSLWPDSGWVMILLSSSIMIFIHLLS</sequence>
<accession>F4JPE9</accession>
<accession>F4JPE8</accession>
<accession>O22992</accession>
<accession>Q9T0A9</accession>
<evidence type="ECO:0000255" key="1"/>
<evidence type="ECO:0000255" key="2">
    <source>
        <dbReference type="PROSITE-ProRule" id="PRU00802"/>
    </source>
</evidence>
<evidence type="ECO:0000256" key="3">
    <source>
        <dbReference type="SAM" id="MobiDB-lite"/>
    </source>
</evidence>
<evidence type="ECO:0000269" key="4">
    <source>
    </source>
</evidence>
<evidence type="ECO:0000303" key="5">
    <source>
    </source>
</evidence>
<evidence type="ECO:0000305" key="6"/>
<evidence type="ECO:0000312" key="7">
    <source>
        <dbReference type="Araport" id="AT4G23950"/>
    </source>
</evidence>
<evidence type="ECO:0000312" key="8">
    <source>
        <dbReference type="EMBL" id="AAB63627.1"/>
    </source>
</evidence>
<evidence type="ECO:0000312" key="9">
    <source>
        <dbReference type="EMBL" id="CAB43895.1"/>
    </source>
</evidence>
<gene>
    <name evidence="5" type="primary">SUN5</name>
    <name evidence="7" type="ordered locus">At4g23950</name>
    <name evidence="8" type="ORF">T19F6.21</name>
    <name evidence="9" type="ORF">T32A16.120</name>
</gene>
<keyword id="KW-0025">Alternative splicing</keyword>
<keyword id="KW-0175">Coiled coil</keyword>
<keyword id="KW-0472">Membrane</keyword>
<keyword id="KW-1185">Reference proteome</keyword>
<keyword id="KW-0812">Transmembrane</keyword>
<keyword id="KW-1133">Transmembrane helix</keyword>